<proteinExistence type="inferred from homology"/>
<reference key="1">
    <citation type="submission" date="2006-11" db="EMBL/GenBank/DDBJ databases">
        <title>Identification and characterization of a new conjugation/ type IVA secretion system (trb/tra) of L. pneumophila Corby localized on a mobile genomic island.</title>
        <authorList>
            <person name="Gloeckner G."/>
            <person name="Albert-Weissenberger C."/>
            <person name="Weinmann E."/>
            <person name="Jacobi S."/>
            <person name="Schunder E."/>
            <person name="Steinert M."/>
            <person name="Buchrieser C."/>
            <person name="Hacker J."/>
            <person name="Heuner K."/>
        </authorList>
    </citation>
    <scope>NUCLEOTIDE SEQUENCE [LARGE SCALE GENOMIC DNA]</scope>
    <source>
        <strain>Corby</strain>
    </source>
</reference>
<name>LFTR_LEGPC</name>
<keyword id="KW-0012">Acyltransferase</keyword>
<keyword id="KW-0963">Cytoplasm</keyword>
<keyword id="KW-0808">Transferase</keyword>
<feature type="chain" id="PRO_1000045107" description="Leucyl/phenylalanyl-tRNA--protein transferase">
    <location>
        <begin position="1"/>
        <end position="222"/>
    </location>
</feature>
<comment type="function">
    <text evidence="1">Functions in the N-end rule pathway of protein degradation where it conjugates Leu, Phe and, less efficiently, Met from aminoacyl-tRNAs to the N-termini of proteins containing an N-terminal arginine or lysine.</text>
</comment>
<comment type="catalytic activity">
    <reaction evidence="1">
        <text>N-terminal L-lysyl-[protein] + L-leucyl-tRNA(Leu) = N-terminal L-leucyl-L-lysyl-[protein] + tRNA(Leu) + H(+)</text>
        <dbReference type="Rhea" id="RHEA:12340"/>
        <dbReference type="Rhea" id="RHEA-COMP:9613"/>
        <dbReference type="Rhea" id="RHEA-COMP:9622"/>
        <dbReference type="Rhea" id="RHEA-COMP:12670"/>
        <dbReference type="Rhea" id="RHEA-COMP:12671"/>
        <dbReference type="ChEBI" id="CHEBI:15378"/>
        <dbReference type="ChEBI" id="CHEBI:65249"/>
        <dbReference type="ChEBI" id="CHEBI:78442"/>
        <dbReference type="ChEBI" id="CHEBI:78494"/>
        <dbReference type="ChEBI" id="CHEBI:133043"/>
        <dbReference type="EC" id="2.3.2.6"/>
    </reaction>
</comment>
<comment type="catalytic activity">
    <reaction evidence="1">
        <text>N-terminal L-arginyl-[protein] + L-leucyl-tRNA(Leu) = N-terminal L-leucyl-L-arginyl-[protein] + tRNA(Leu) + H(+)</text>
        <dbReference type="Rhea" id="RHEA:50416"/>
        <dbReference type="Rhea" id="RHEA-COMP:9613"/>
        <dbReference type="Rhea" id="RHEA-COMP:9622"/>
        <dbReference type="Rhea" id="RHEA-COMP:12672"/>
        <dbReference type="Rhea" id="RHEA-COMP:12673"/>
        <dbReference type="ChEBI" id="CHEBI:15378"/>
        <dbReference type="ChEBI" id="CHEBI:64719"/>
        <dbReference type="ChEBI" id="CHEBI:78442"/>
        <dbReference type="ChEBI" id="CHEBI:78494"/>
        <dbReference type="ChEBI" id="CHEBI:133044"/>
        <dbReference type="EC" id="2.3.2.6"/>
    </reaction>
</comment>
<comment type="catalytic activity">
    <reaction evidence="1">
        <text>L-phenylalanyl-tRNA(Phe) + an N-terminal L-alpha-aminoacyl-[protein] = an N-terminal L-phenylalanyl-L-alpha-aminoacyl-[protein] + tRNA(Phe)</text>
        <dbReference type="Rhea" id="RHEA:43632"/>
        <dbReference type="Rhea" id="RHEA-COMP:9668"/>
        <dbReference type="Rhea" id="RHEA-COMP:9699"/>
        <dbReference type="Rhea" id="RHEA-COMP:10636"/>
        <dbReference type="Rhea" id="RHEA-COMP:10637"/>
        <dbReference type="ChEBI" id="CHEBI:78442"/>
        <dbReference type="ChEBI" id="CHEBI:78531"/>
        <dbReference type="ChEBI" id="CHEBI:78597"/>
        <dbReference type="ChEBI" id="CHEBI:83561"/>
        <dbReference type="EC" id="2.3.2.6"/>
    </reaction>
</comment>
<comment type="subcellular location">
    <subcellularLocation>
        <location evidence="1">Cytoplasm</location>
    </subcellularLocation>
</comment>
<comment type="similarity">
    <text evidence="1">Belongs to the L/F-transferase family.</text>
</comment>
<sequence length="222" mass="25473">MAYDSNYTFPDPETSDKQGLLAIGGVLTPKRVLQAYSQGIFPWYEPGNPVLWWSPNPRLILIPNEFKISRSLKKTLKKPFKLTVDTAFQRVISYCATCSDRSNKTWITSEMIETYTQLHEMGYAHSFEIWDGSELVGGLYGISLGHAFFGESMFHTITDASKVALHFLCRIMQSWNFDFIDCQLPTLHLMSLGAKIISRKEFLHMLQETLKYPDKKGNWSID</sequence>
<accession>A5ICS3</accession>
<organism>
    <name type="scientific">Legionella pneumophila (strain Corby)</name>
    <dbReference type="NCBI Taxonomy" id="400673"/>
    <lineage>
        <taxon>Bacteria</taxon>
        <taxon>Pseudomonadati</taxon>
        <taxon>Pseudomonadota</taxon>
        <taxon>Gammaproteobacteria</taxon>
        <taxon>Legionellales</taxon>
        <taxon>Legionellaceae</taxon>
        <taxon>Legionella</taxon>
    </lineage>
</organism>
<evidence type="ECO:0000255" key="1">
    <source>
        <dbReference type="HAMAP-Rule" id="MF_00688"/>
    </source>
</evidence>
<dbReference type="EC" id="2.3.2.6" evidence="1"/>
<dbReference type="EMBL" id="CP000675">
    <property type="protein sequence ID" value="ABQ55173.1"/>
    <property type="molecule type" value="Genomic_DNA"/>
</dbReference>
<dbReference type="RefSeq" id="WP_010947494.1">
    <property type="nucleotide sequence ID" value="NZ_JAPMSS010000005.1"/>
</dbReference>
<dbReference type="SMR" id="A5ICS3"/>
<dbReference type="GeneID" id="57035757"/>
<dbReference type="KEGG" id="lpc:LPC_1209"/>
<dbReference type="HOGENOM" id="CLU_075045_0_0_6"/>
<dbReference type="GO" id="GO:0005737">
    <property type="term" value="C:cytoplasm"/>
    <property type="evidence" value="ECO:0007669"/>
    <property type="project" value="UniProtKB-SubCell"/>
</dbReference>
<dbReference type="GO" id="GO:0008914">
    <property type="term" value="F:leucyl-tRNA--protein transferase activity"/>
    <property type="evidence" value="ECO:0007669"/>
    <property type="project" value="UniProtKB-UniRule"/>
</dbReference>
<dbReference type="GO" id="GO:0030163">
    <property type="term" value="P:protein catabolic process"/>
    <property type="evidence" value="ECO:0007669"/>
    <property type="project" value="UniProtKB-UniRule"/>
</dbReference>
<dbReference type="FunFam" id="3.30.70.3550:FF:000001">
    <property type="entry name" value="Leucyl/phenylalanyl-tRNA--protein transferase"/>
    <property type="match status" value="1"/>
</dbReference>
<dbReference type="FunFam" id="3.40.630.70:FF:000001">
    <property type="entry name" value="Leucyl/phenylalanyl-tRNA--protein transferase"/>
    <property type="match status" value="1"/>
</dbReference>
<dbReference type="Gene3D" id="3.40.630.70">
    <property type="entry name" value="Leucyl/phenylalanyl-tRNA-protein transferase, C-terminal domain"/>
    <property type="match status" value="1"/>
</dbReference>
<dbReference type="Gene3D" id="3.30.70.3550">
    <property type="entry name" value="Leucyl/phenylalanyl-tRNA-protein transferase, N-terminal domain"/>
    <property type="match status" value="1"/>
</dbReference>
<dbReference type="HAMAP" id="MF_00688">
    <property type="entry name" value="Leu_Phe_trans"/>
    <property type="match status" value="1"/>
</dbReference>
<dbReference type="InterPro" id="IPR016181">
    <property type="entry name" value="Acyl_CoA_acyltransferase"/>
</dbReference>
<dbReference type="InterPro" id="IPR004616">
    <property type="entry name" value="Leu/Phe-tRNA_Trfase"/>
</dbReference>
<dbReference type="InterPro" id="IPR042203">
    <property type="entry name" value="Leu/Phe-tRNA_Trfase_C"/>
</dbReference>
<dbReference type="InterPro" id="IPR042221">
    <property type="entry name" value="Leu/Phe-tRNA_Trfase_N"/>
</dbReference>
<dbReference type="NCBIfam" id="TIGR00667">
    <property type="entry name" value="aat"/>
    <property type="match status" value="1"/>
</dbReference>
<dbReference type="PANTHER" id="PTHR30098">
    <property type="entry name" value="LEUCYL/PHENYLALANYL-TRNA--PROTEIN TRANSFERASE"/>
    <property type="match status" value="1"/>
</dbReference>
<dbReference type="PANTHER" id="PTHR30098:SF2">
    <property type="entry name" value="LEUCYL_PHENYLALANYL-TRNA--PROTEIN TRANSFERASE"/>
    <property type="match status" value="1"/>
</dbReference>
<dbReference type="Pfam" id="PF03588">
    <property type="entry name" value="Leu_Phe_trans"/>
    <property type="match status" value="1"/>
</dbReference>
<dbReference type="SUPFAM" id="SSF55729">
    <property type="entry name" value="Acyl-CoA N-acyltransferases (Nat)"/>
    <property type="match status" value="1"/>
</dbReference>
<protein>
    <recommendedName>
        <fullName evidence="1">Leucyl/phenylalanyl-tRNA--protein transferase</fullName>
        <ecNumber evidence="1">2.3.2.6</ecNumber>
    </recommendedName>
    <alternativeName>
        <fullName evidence="1">L/F-transferase</fullName>
    </alternativeName>
    <alternativeName>
        <fullName evidence="1">Leucyltransferase</fullName>
    </alternativeName>
    <alternativeName>
        <fullName evidence="1">Phenyalanyltransferase</fullName>
    </alternativeName>
</protein>
<gene>
    <name evidence="1" type="primary">aat</name>
    <name type="ordered locus">LPC_1209</name>
</gene>